<keyword id="KW-0963">Cytoplasm</keyword>
<keyword id="KW-0417">Keratinization</keyword>
<keyword id="KW-1185">Reference proteome</keyword>
<gene>
    <name type="primary">Cnfn</name>
</gene>
<evidence type="ECO:0000250" key="1"/>
<evidence type="ECO:0000269" key="2">
    <source>
    </source>
</evidence>
<evidence type="ECO:0000305" key="3"/>
<organism>
    <name type="scientific">Mus musculus</name>
    <name type="common">Mouse</name>
    <dbReference type="NCBI Taxonomy" id="10090"/>
    <lineage>
        <taxon>Eukaryota</taxon>
        <taxon>Metazoa</taxon>
        <taxon>Chordata</taxon>
        <taxon>Craniata</taxon>
        <taxon>Vertebrata</taxon>
        <taxon>Euteleostomi</taxon>
        <taxon>Mammalia</taxon>
        <taxon>Eutheria</taxon>
        <taxon>Euarchontoglires</taxon>
        <taxon>Glires</taxon>
        <taxon>Rodentia</taxon>
        <taxon>Myomorpha</taxon>
        <taxon>Muroidea</taxon>
        <taxon>Muridae</taxon>
        <taxon>Murinae</taxon>
        <taxon>Mus</taxon>
        <taxon>Mus</taxon>
    </lineage>
</organism>
<accession>Q6PCW6</accession>
<name>CNFN_MOUSE</name>
<reference key="1">
    <citation type="journal article" date="2004" name="Genome Res.">
        <title>The status, quality, and expansion of the NIH full-length cDNA project: the Mammalian Gene Collection (MGC).</title>
        <authorList>
            <consortium name="The MGC Project Team"/>
        </authorList>
    </citation>
    <scope>NUCLEOTIDE SEQUENCE [LARGE SCALE MRNA]</scope>
    <source>
        <tissue>Jaw</tissue>
        <tissue>Limb</tissue>
    </source>
</reference>
<reference key="2">
    <citation type="journal article" date="2004" name="Biochem. Biophys. Res. Commun.">
        <title>Identification and characterization of a novel component of the cornified envelope, cornifelin.</title>
        <authorList>
            <person name="Michibata H."/>
            <person name="Chiba H."/>
            <person name="Wakimoto K."/>
            <person name="Seishima M."/>
            <person name="Kawasaki S."/>
            <person name="Okubo K."/>
            <person name="Mitsui H."/>
            <person name="Torii H."/>
            <person name="Imai Y."/>
        </authorList>
    </citation>
    <scope>FUNCTION</scope>
    <scope>INTERACTION WITH LORICIN AND INVOLUCRIN</scope>
</reference>
<feature type="chain" id="PRO_0000261196" description="Cornifelin">
    <location>
        <begin position="1"/>
        <end position="111"/>
    </location>
</feature>
<dbReference type="EMBL" id="BC059093">
    <property type="protein sequence ID" value="AAH59093.1"/>
    <property type="molecule type" value="mRNA"/>
</dbReference>
<dbReference type="CCDS" id="CCDS39838.1"/>
<dbReference type="RefSeq" id="NP_001074844.1">
    <property type="nucleotide sequence ID" value="NM_001081375.1"/>
</dbReference>
<dbReference type="FunCoup" id="Q6PCW6">
    <property type="interactions" value="99"/>
</dbReference>
<dbReference type="STRING" id="10090.ENSMUSP00000130957"/>
<dbReference type="SwissPalm" id="Q6PCW6"/>
<dbReference type="PaxDb" id="10090-ENSMUSP00000130957"/>
<dbReference type="ProteomicsDB" id="285506"/>
<dbReference type="Antibodypedia" id="62296">
    <property type="antibodies" value="17 antibodies from 7 providers"/>
</dbReference>
<dbReference type="DNASU" id="72383"/>
<dbReference type="Ensembl" id="ENSMUST00000076276.5">
    <property type="protein sequence ID" value="ENSMUSP00000075625.4"/>
    <property type="gene ID" value="ENSMUSG00000063651.12"/>
</dbReference>
<dbReference type="GeneID" id="72383"/>
<dbReference type="KEGG" id="mmu:72383"/>
<dbReference type="UCSC" id="uc009fsl.1">
    <property type="organism name" value="mouse"/>
</dbReference>
<dbReference type="AGR" id="MGI:1919633"/>
<dbReference type="CTD" id="84518"/>
<dbReference type="MGI" id="MGI:1919633">
    <property type="gene designation" value="Cnfn"/>
</dbReference>
<dbReference type="VEuPathDB" id="HostDB:ENSMUSG00000063651"/>
<dbReference type="eggNOG" id="ENOG502S8N3">
    <property type="taxonomic scope" value="Eukaryota"/>
</dbReference>
<dbReference type="GeneTree" id="ENSGT00940000161202"/>
<dbReference type="HOGENOM" id="CLU_083147_5_2_1"/>
<dbReference type="InParanoid" id="Q6PCW6"/>
<dbReference type="OMA" id="CASTCYQ"/>
<dbReference type="OrthoDB" id="1045822at2759"/>
<dbReference type="PhylomeDB" id="Q6PCW6"/>
<dbReference type="BioGRID-ORCS" id="72383">
    <property type="hits" value="3 hits in 81 CRISPR screens"/>
</dbReference>
<dbReference type="ChiTaRS" id="Cnfn">
    <property type="organism name" value="mouse"/>
</dbReference>
<dbReference type="PRO" id="PR:Q6PCW6"/>
<dbReference type="Proteomes" id="UP000000589">
    <property type="component" value="Chromosome 7"/>
</dbReference>
<dbReference type="RNAct" id="Q6PCW6">
    <property type="molecule type" value="protein"/>
</dbReference>
<dbReference type="Bgee" id="ENSMUSG00000063651">
    <property type="expression patterns" value="Expressed in esophagus and 53 other cell types or tissues"/>
</dbReference>
<dbReference type="ExpressionAtlas" id="Q6PCW6">
    <property type="expression patterns" value="baseline and differential"/>
</dbReference>
<dbReference type="GO" id="GO:0001533">
    <property type="term" value="C:cornified envelope"/>
    <property type="evidence" value="ECO:0000266"/>
    <property type="project" value="MGI"/>
</dbReference>
<dbReference type="GO" id="GO:0005737">
    <property type="term" value="C:cytoplasm"/>
    <property type="evidence" value="ECO:0007669"/>
    <property type="project" value="UniProtKB-SubCell"/>
</dbReference>
<dbReference type="GO" id="GO:0031424">
    <property type="term" value="P:keratinization"/>
    <property type="evidence" value="ECO:0007669"/>
    <property type="project" value="UniProtKB-KW"/>
</dbReference>
<dbReference type="InterPro" id="IPR006461">
    <property type="entry name" value="PLAC_motif_containing"/>
</dbReference>
<dbReference type="NCBIfam" id="TIGR01571">
    <property type="entry name" value="A_thal_Cys_rich"/>
    <property type="match status" value="1"/>
</dbReference>
<dbReference type="PANTHER" id="PTHR15907">
    <property type="entry name" value="DUF614 FAMILY PROTEIN-RELATED"/>
    <property type="match status" value="1"/>
</dbReference>
<dbReference type="Pfam" id="PF04749">
    <property type="entry name" value="PLAC8"/>
    <property type="match status" value="1"/>
</dbReference>
<proteinExistence type="evidence at protein level"/>
<comment type="function">
    <text evidence="2">Part of the insoluble cornified cell envelope (CE) of stratified squamous epithelia.</text>
</comment>
<comment type="subunit">
    <text>Directly or indirectly cross-linked to CE proteins loricin and involucrin (IVL).</text>
</comment>
<comment type="subcellular location">
    <subcellularLocation>
        <location>Cytoplasm</location>
    </subcellularLocation>
    <text evidence="1">Constituent of the scaffolding of the cornified envelope.</text>
</comment>
<comment type="similarity">
    <text evidence="3">Belongs to the cornifelin family.</text>
</comment>
<protein>
    <recommendedName>
        <fullName>Cornifelin</fullName>
    </recommendedName>
</protein>
<sequence length="111" mass="12302">MSYPVTSQPQCANTCYQTQLSDWHTGLTDCCNDMPVCLCGTFAPLCLACRISDDFGECCCAPYLPGGLHSLRTGMRERYHIQGSVGHDWAALTFCLPCALCQMARELKIRE</sequence>